<keyword id="KW-0997">Cell inner membrane</keyword>
<keyword id="KW-1003">Cell membrane</keyword>
<keyword id="KW-0472">Membrane</keyword>
<keyword id="KW-0653">Protein transport</keyword>
<keyword id="KW-0811">Translocation</keyword>
<keyword id="KW-0812">Transmembrane</keyword>
<keyword id="KW-1133">Transmembrane helix</keyword>
<keyword id="KW-0813">Transport</keyword>
<dbReference type="EMBL" id="BX936398">
    <property type="protein sequence ID" value="CAH19499.1"/>
    <property type="molecule type" value="Genomic_DNA"/>
</dbReference>
<dbReference type="RefSeq" id="WP_011191542.1">
    <property type="nucleotide sequence ID" value="NC_006155.1"/>
</dbReference>
<dbReference type="SMR" id="Q66FS6"/>
<dbReference type="GeneID" id="49787759"/>
<dbReference type="KEGG" id="ypo:BZ17_2324"/>
<dbReference type="KEGG" id="yps:YPTB0259"/>
<dbReference type="PATRIC" id="fig|273123.14.peg.2447"/>
<dbReference type="Proteomes" id="UP000001011">
    <property type="component" value="Chromosome"/>
</dbReference>
<dbReference type="GO" id="GO:0033281">
    <property type="term" value="C:TAT protein transport complex"/>
    <property type="evidence" value="ECO:0007669"/>
    <property type="project" value="UniProtKB-UniRule"/>
</dbReference>
<dbReference type="GO" id="GO:0008320">
    <property type="term" value="F:protein transmembrane transporter activity"/>
    <property type="evidence" value="ECO:0007669"/>
    <property type="project" value="UniProtKB-UniRule"/>
</dbReference>
<dbReference type="GO" id="GO:0043953">
    <property type="term" value="P:protein transport by the Tat complex"/>
    <property type="evidence" value="ECO:0007669"/>
    <property type="project" value="UniProtKB-UniRule"/>
</dbReference>
<dbReference type="Gene3D" id="1.20.5.3310">
    <property type="match status" value="1"/>
</dbReference>
<dbReference type="HAMAP" id="MF_00237">
    <property type="entry name" value="TatB"/>
    <property type="match status" value="1"/>
</dbReference>
<dbReference type="InterPro" id="IPR018448">
    <property type="entry name" value="TatB"/>
</dbReference>
<dbReference type="NCBIfam" id="TIGR01410">
    <property type="entry name" value="tatB"/>
    <property type="match status" value="1"/>
</dbReference>
<dbReference type="PANTHER" id="PTHR33162">
    <property type="entry name" value="SEC-INDEPENDENT PROTEIN TRANSLOCASE PROTEIN TATA, CHLOROPLASTIC"/>
    <property type="match status" value="1"/>
</dbReference>
<dbReference type="PANTHER" id="PTHR33162:SF1">
    <property type="entry name" value="SEC-INDEPENDENT PROTEIN TRANSLOCASE PROTEIN TATA, CHLOROPLASTIC"/>
    <property type="match status" value="1"/>
</dbReference>
<dbReference type="PRINTS" id="PR01506">
    <property type="entry name" value="TATBPROTEIN"/>
</dbReference>
<feature type="chain" id="PRO_0000301255" description="Sec-independent protein translocase protein TatB">
    <location>
        <begin position="1"/>
        <end position="220"/>
    </location>
</feature>
<feature type="transmembrane region" description="Helical" evidence="1">
    <location>
        <begin position="1"/>
        <end position="21"/>
    </location>
</feature>
<feature type="region of interest" description="Disordered" evidence="2">
    <location>
        <begin position="190"/>
        <end position="220"/>
    </location>
</feature>
<evidence type="ECO:0000255" key="1">
    <source>
        <dbReference type="HAMAP-Rule" id="MF_00237"/>
    </source>
</evidence>
<evidence type="ECO:0000256" key="2">
    <source>
        <dbReference type="SAM" id="MobiDB-lite"/>
    </source>
</evidence>
<protein>
    <recommendedName>
        <fullName evidence="1">Sec-independent protein translocase protein TatB</fullName>
    </recommendedName>
</protein>
<proteinExistence type="inferred from homology"/>
<sequence length="220" mass="23251">MFDIGFSELLLVLVIGLVVLGPERLPVAVRTVSGWIRTLRSLAATVQNELAQELKLQELQDSLKKVEQAGLQNLTPELKASMDELKEAAEALKRSYHVDAGSEAPHTIHNPLVTEPEAIHDGVTPAEPATQVSALAQAPNILEAGTASVADSVVEAAPVTTVKSVVQGEVLVKSTPVQEVGLADVMDKPVTKQQIDTIDSHGTDLSSAGPSRIHQPGGDQ</sequence>
<organism>
    <name type="scientific">Yersinia pseudotuberculosis serotype I (strain IP32953)</name>
    <dbReference type="NCBI Taxonomy" id="273123"/>
    <lineage>
        <taxon>Bacteria</taxon>
        <taxon>Pseudomonadati</taxon>
        <taxon>Pseudomonadota</taxon>
        <taxon>Gammaproteobacteria</taxon>
        <taxon>Enterobacterales</taxon>
        <taxon>Yersiniaceae</taxon>
        <taxon>Yersinia</taxon>
    </lineage>
</organism>
<gene>
    <name evidence="1" type="primary">tatB</name>
    <name type="ordered locus">YPTB0259</name>
</gene>
<comment type="function">
    <text evidence="1">Part of the twin-arginine translocation (Tat) system that transports large folded proteins containing a characteristic twin-arginine motif in their signal peptide across membranes. Together with TatC, TatB is part of a receptor directly interacting with Tat signal peptides. TatB may form an oligomeric binding site that transiently accommodates folded Tat precursor proteins before their translocation.</text>
</comment>
<comment type="subunit">
    <text evidence="1">The Tat system comprises two distinct complexes: a TatABC complex, containing multiple copies of TatA, TatB and TatC subunits, and a separate TatA complex, containing only TatA subunits. Substrates initially bind to the TatABC complex, which probably triggers association of the separate TatA complex to form the active translocon.</text>
</comment>
<comment type="subcellular location">
    <subcellularLocation>
        <location evidence="1">Cell inner membrane</location>
        <topology evidence="1">Single-pass membrane protein</topology>
    </subcellularLocation>
</comment>
<comment type="similarity">
    <text evidence="1">Belongs to the TatB family.</text>
</comment>
<accession>Q66FS6</accession>
<reference key="1">
    <citation type="journal article" date="2004" name="Proc. Natl. Acad. Sci. U.S.A.">
        <title>Insights into the evolution of Yersinia pestis through whole-genome comparison with Yersinia pseudotuberculosis.</title>
        <authorList>
            <person name="Chain P.S.G."/>
            <person name="Carniel E."/>
            <person name="Larimer F.W."/>
            <person name="Lamerdin J."/>
            <person name="Stoutland P.O."/>
            <person name="Regala W.M."/>
            <person name="Georgescu A.M."/>
            <person name="Vergez L.M."/>
            <person name="Land M.L."/>
            <person name="Motin V.L."/>
            <person name="Brubaker R.R."/>
            <person name="Fowler J."/>
            <person name="Hinnebusch J."/>
            <person name="Marceau M."/>
            <person name="Medigue C."/>
            <person name="Simonet M."/>
            <person name="Chenal-Francisque V."/>
            <person name="Souza B."/>
            <person name="Dacheux D."/>
            <person name="Elliott J.M."/>
            <person name="Derbise A."/>
            <person name="Hauser L.J."/>
            <person name="Garcia E."/>
        </authorList>
    </citation>
    <scope>NUCLEOTIDE SEQUENCE [LARGE SCALE GENOMIC DNA]</scope>
    <source>
        <strain>IP32953</strain>
    </source>
</reference>
<name>TATB_YERPS</name>